<proteinExistence type="inferred from homology"/>
<gene>
    <name evidence="1" type="primary">rpsK</name>
    <name type="ordered locus">Pden_0783</name>
</gene>
<feature type="chain" id="PRO_0000294815" description="Small ribosomal subunit protein uS11">
    <location>
        <begin position="1"/>
        <end position="129"/>
    </location>
</feature>
<keyword id="KW-1185">Reference proteome</keyword>
<keyword id="KW-0687">Ribonucleoprotein</keyword>
<keyword id="KW-0689">Ribosomal protein</keyword>
<keyword id="KW-0694">RNA-binding</keyword>
<keyword id="KW-0699">rRNA-binding</keyword>
<sequence length="129" mass="13884">MARDKTRIKRKERKNIATGVAHVNSSFNNTKILISDVQGNAISWSSAGTMGFKGSRKSTPYAAQMAAEDAGKKAQEHGVRTLEVEVQGPGSGRESALRALAAVGFNITAIRDVTPIAHNGCRPPKRRRV</sequence>
<dbReference type="EMBL" id="CP000489">
    <property type="protein sequence ID" value="ABL68895.1"/>
    <property type="molecule type" value="Genomic_DNA"/>
</dbReference>
<dbReference type="RefSeq" id="WP_011747123.1">
    <property type="nucleotide sequence ID" value="NC_008686.1"/>
</dbReference>
<dbReference type="SMR" id="A1B051"/>
<dbReference type="STRING" id="318586.Pden_0783"/>
<dbReference type="EnsemblBacteria" id="ABL68895">
    <property type="protein sequence ID" value="ABL68895"/>
    <property type="gene ID" value="Pden_0783"/>
</dbReference>
<dbReference type="GeneID" id="93452007"/>
<dbReference type="KEGG" id="pde:Pden_0783"/>
<dbReference type="eggNOG" id="COG0100">
    <property type="taxonomic scope" value="Bacteria"/>
</dbReference>
<dbReference type="HOGENOM" id="CLU_072439_5_0_5"/>
<dbReference type="OrthoDB" id="9806415at2"/>
<dbReference type="Proteomes" id="UP000000361">
    <property type="component" value="Chromosome 1"/>
</dbReference>
<dbReference type="GO" id="GO:1990904">
    <property type="term" value="C:ribonucleoprotein complex"/>
    <property type="evidence" value="ECO:0007669"/>
    <property type="project" value="UniProtKB-KW"/>
</dbReference>
<dbReference type="GO" id="GO:0005840">
    <property type="term" value="C:ribosome"/>
    <property type="evidence" value="ECO:0007669"/>
    <property type="project" value="UniProtKB-KW"/>
</dbReference>
<dbReference type="GO" id="GO:0019843">
    <property type="term" value="F:rRNA binding"/>
    <property type="evidence" value="ECO:0007669"/>
    <property type="project" value="UniProtKB-UniRule"/>
</dbReference>
<dbReference type="GO" id="GO:0003735">
    <property type="term" value="F:structural constituent of ribosome"/>
    <property type="evidence" value="ECO:0007669"/>
    <property type="project" value="InterPro"/>
</dbReference>
<dbReference type="GO" id="GO:0006412">
    <property type="term" value="P:translation"/>
    <property type="evidence" value="ECO:0007669"/>
    <property type="project" value="UniProtKB-UniRule"/>
</dbReference>
<dbReference type="FunFam" id="3.30.420.80:FF:000001">
    <property type="entry name" value="30S ribosomal protein S11"/>
    <property type="match status" value="1"/>
</dbReference>
<dbReference type="Gene3D" id="3.30.420.80">
    <property type="entry name" value="Ribosomal protein S11"/>
    <property type="match status" value="1"/>
</dbReference>
<dbReference type="HAMAP" id="MF_01310">
    <property type="entry name" value="Ribosomal_uS11"/>
    <property type="match status" value="1"/>
</dbReference>
<dbReference type="InterPro" id="IPR001971">
    <property type="entry name" value="Ribosomal_uS11"/>
</dbReference>
<dbReference type="InterPro" id="IPR019981">
    <property type="entry name" value="Ribosomal_uS11_bac-type"/>
</dbReference>
<dbReference type="InterPro" id="IPR018102">
    <property type="entry name" value="Ribosomal_uS11_CS"/>
</dbReference>
<dbReference type="InterPro" id="IPR036967">
    <property type="entry name" value="Ribosomal_uS11_sf"/>
</dbReference>
<dbReference type="NCBIfam" id="NF003698">
    <property type="entry name" value="PRK05309.1"/>
    <property type="match status" value="1"/>
</dbReference>
<dbReference type="NCBIfam" id="TIGR03632">
    <property type="entry name" value="uS11_bact"/>
    <property type="match status" value="1"/>
</dbReference>
<dbReference type="PANTHER" id="PTHR11759">
    <property type="entry name" value="40S RIBOSOMAL PROTEIN S14/30S RIBOSOMAL PROTEIN S11"/>
    <property type="match status" value="1"/>
</dbReference>
<dbReference type="Pfam" id="PF00411">
    <property type="entry name" value="Ribosomal_S11"/>
    <property type="match status" value="1"/>
</dbReference>
<dbReference type="PIRSF" id="PIRSF002131">
    <property type="entry name" value="Ribosomal_S11"/>
    <property type="match status" value="1"/>
</dbReference>
<dbReference type="SUPFAM" id="SSF53137">
    <property type="entry name" value="Translational machinery components"/>
    <property type="match status" value="1"/>
</dbReference>
<dbReference type="PROSITE" id="PS00054">
    <property type="entry name" value="RIBOSOMAL_S11"/>
    <property type="match status" value="1"/>
</dbReference>
<accession>A1B051</accession>
<name>RS11_PARDP</name>
<evidence type="ECO:0000255" key="1">
    <source>
        <dbReference type="HAMAP-Rule" id="MF_01310"/>
    </source>
</evidence>
<evidence type="ECO:0000305" key="2"/>
<reference key="1">
    <citation type="submission" date="2006-12" db="EMBL/GenBank/DDBJ databases">
        <title>Complete sequence of chromosome 1 of Paracoccus denitrificans PD1222.</title>
        <authorList>
            <person name="Copeland A."/>
            <person name="Lucas S."/>
            <person name="Lapidus A."/>
            <person name="Barry K."/>
            <person name="Detter J.C."/>
            <person name="Glavina del Rio T."/>
            <person name="Hammon N."/>
            <person name="Israni S."/>
            <person name="Dalin E."/>
            <person name="Tice H."/>
            <person name="Pitluck S."/>
            <person name="Munk A.C."/>
            <person name="Brettin T."/>
            <person name="Bruce D."/>
            <person name="Han C."/>
            <person name="Tapia R."/>
            <person name="Gilna P."/>
            <person name="Schmutz J."/>
            <person name="Larimer F."/>
            <person name="Land M."/>
            <person name="Hauser L."/>
            <person name="Kyrpides N."/>
            <person name="Lykidis A."/>
            <person name="Spiro S."/>
            <person name="Richardson D.J."/>
            <person name="Moir J.W.B."/>
            <person name="Ferguson S.J."/>
            <person name="van Spanning R.J.M."/>
            <person name="Richardson P."/>
        </authorList>
    </citation>
    <scope>NUCLEOTIDE SEQUENCE [LARGE SCALE GENOMIC DNA]</scope>
    <source>
        <strain>Pd 1222</strain>
    </source>
</reference>
<protein>
    <recommendedName>
        <fullName evidence="1">Small ribosomal subunit protein uS11</fullName>
    </recommendedName>
    <alternativeName>
        <fullName evidence="2">30S ribosomal protein S11</fullName>
    </alternativeName>
</protein>
<organism>
    <name type="scientific">Paracoccus denitrificans (strain Pd 1222)</name>
    <dbReference type="NCBI Taxonomy" id="318586"/>
    <lineage>
        <taxon>Bacteria</taxon>
        <taxon>Pseudomonadati</taxon>
        <taxon>Pseudomonadota</taxon>
        <taxon>Alphaproteobacteria</taxon>
        <taxon>Rhodobacterales</taxon>
        <taxon>Paracoccaceae</taxon>
        <taxon>Paracoccus</taxon>
    </lineage>
</organism>
<comment type="function">
    <text evidence="1">Located on the platform of the 30S subunit, it bridges several disparate RNA helices of the 16S rRNA. Forms part of the Shine-Dalgarno cleft in the 70S ribosome.</text>
</comment>
<comment type="subunit">
    <text evidence="1">Part of the 30S ribosomal subunit. Interacts with proteins S7 and S18. Binds to IF-3.</text>
</comment>
<comment type="similarity">
    <text evidence="1">Belongs to the universal ribosomal protein uS11 family.</text>
</comment>